<comment type="function">
    <text evidence="1">Orphan receptor that acts as a transcription activator in the absence of bound ligand. Binds specifically to an estrogen response element and activates reporter genes controlled by estrogen response elements. Induces the expression of PERM1 in the skeletal muscle (By similarity).</text>
</comment>
<comment type="subunit">
    <text evidence="1">Homodimer. Interacts with NRIP1, NCOA1 and NCOR2. Binds TLE1, PNRC1 and PNRC2. Binds GRIP1 (By similarity).</text>
</comment>
<comment type="subcellular location">
    <subcellularLocation>
        <location evidence="6">Nucleus</location>
    </subcellularLocation>
</comment>
<comment type="alternative products">
    <event type="alternative splicing"/>
    <isoform>
        <id>P62510-1</id>
        <name>1</name>
        <name>Errg-1</name>
        <name>Long</name>
        <sequence type="displayed"/>
    </isoform>
    <isoform>
        <id>P62510-2</id>
        <name>2</name>
        <name>Errg-2</name>
        <name>Short</name>
        <sequence type="described" ref="VSP_010767"/>
    </isoform>
</comment>
<comment type="PTM">
    <text evidence="1">Acetylated by PCAF/KAT2 (in vitro).</text>
</comment>
<comment type="similarity">
    <text evidence="6">Belongs to the nuclear hormone receptor family. NR3 subfamily.</text>
</comment>
<feature type="chain" id="PRO_0000053668" description="Estrogen-related receptor gamma">
    <location>
        <begin position="1"/>
        <end position="458"/>
    </location>
</feature>
<feature type="domain" description="NR LBD" evidence="3">
    <location>
        <begin position="233"/>
        <end position="457"/>
    </location>
</feature>
<feature type="DNA-binding region" description="Nuclear receptor" evidence="2">
    <location>
        <begin position="125"/>
        <end position="200"/>
    </location>
</feature>
<feature type="zinc finger region" description="NR C4-type" evidence="2">
    <location>
        <begin position="128"/>
        <end position="148"/>
    </location>
</feature>
<feature type="zinc finger region" description="NR C4-type" evidence="2">
    <location>
        <begin position="164"/>
        <end position="188"/>
    </location>
</feature>
<feature type="region of interest" description="Disordered" evidence="4">
    <location>
        <begin position="42"/>
        <end position="85"/>
    </location>
</feature>
<feature type="compositionally biased region" description="Polar residues" evidence="4">
    <location>
        <begin position="42"/>
        <end position="52"/>
    </location>
</feature>
<feature type="compositionally biased region" description="Low complexity" evidence="4">
    <location>
        <begin position="57"/>
        <end position="70"/>
    </location>
</feature>
<feature type="splice variant" id="VSP_010767" description="In isoform 2." evidence="5">
    <location>
        <begin position="1"/>
        <end position="23"/>
    </location>
</feature>
<feature type="sequence conflict" description="In Ref. 2; AAQ90023." evidence="6" ref="2">
    <original>L</original>
    <variation>W</variation>
    <location>
        <position position="276"/>
    </location>
</feature>
<name>ERR3_RAT</name>
<keyword id="KW-0007">Acetylation</keyword>
<keyword id="KW-0010">Activator</keyword>
<keyword id="KW-0025">Alternative splicing</keyword>
<keyword id="KW-0238">DNA-binding</keyword>
<keyword id="KW-0479">Metal-binding</keyword>
<keyword id="KW-0539">Nucleus</keyword>
<keyword id="KW-0675">Receptor</keyword>
<keyword id="KW-1185">Reference proteome</keyword>
<keyword id="KW-0804">Transcription</keyword>
<keyword id="KW-0805">Transcription regulation</keyword>
<keyword id="KW-0862">Zinc</keyword>
<keyword id="KW-0863">Zinc-finger</keyword>
<organism>
    <name type="scientific">Rattus norvegicus</name>
    <name type="common">Rat</name>
    <dbReference type="NCBI Taxonomy" id="10116"/>
    <lineage>
        <taxon>Eukaryota</taxon>
        <taxon>Metazoa</taxon>
        <taxon>Chordata</taxon>
        <taxon>Craniata</taxon>
        <taxon>Vertebrata</taxon>
        <taxon>Euteleostomi</taxon>
        <taxon>Mammalia</taxon>
        <taxon>Eutheria</taxon>
        <taxon>Euarchontoglires</taxon>
        <taxon>Glires</taxon>
        <taxon>Rodentia</taxon>
        <taxon>Myomorpha</taxon>
        <taxon>Muroidea</taxon>
        <taxon>Muridae</taxon>
        <taxon>Murinae</taxon>
        <taxon>Rattus</taxon>
    </lineage>
</organism>
<accession>P62510</accession>
<accession>Q5QJE4</accession>
<accession>Q75T51</accession>
<accession>Q75T52</accession>
<evidence type="ECO:0000250" key="1"/>
<evidence type="ECO:0000255" key="2">
    <source>
        <dbReference type="PROSITE-ProRule" id="PRU00407"/>
    </source>
</evidence>
<evidence type="ECO:0000255" key="3">
    <source>
        <dbReference type="PROSITE-ProRule" id="PRU01189"/>
    </source>
</evidence>
<evidence type="ECO:0000256" key="4">
    <source>
        <dbReference type="SAM" id="MobiDB-lite"/>
    </source>
</evidence>
<evidence type="ECO:0000303" key="5">
    <source ref="1"/>
</evidence>
<evidence type="ECO:0000305" key="6"/>
<dbReference type="EMBL" id="AB126962">
    <property type="protein sequence ID" value="BAD08616.1"/>
    <property type="molecule type" value="mRNA"/>
</dbReference>
<dbReference type="EMBL" id="AB126963">
    <property type="protein sequence ID" value="BAD08617.1"/>
    <property type="molecule type" value="mRNA"/>
</dbReference>
<dbReference type="EMBL" id="AY341057">
    <property type="protein sequence ID" value="AAQ90023.1"/>
    <property type="molecule type" value="mRNA"/>
</dbReference>
<dbReference type="RefSeq" id="NP_001388372.1">
    <molecule id="P62510-1"/>
    <property type="nucleotide sequence ID" value="NM_001401443.1"/>
</dbReference>
<dbReference type="RefSeq" id="NP_001402052.1">
    <molecule id="P62510-2"/>
    <property type="nucleotide sequence ID" value="NM_001415123.1"/>
</dbReference>
<dbReference type="RefSeq" id="NP_001402053.1">
    <molecule id="P62510-2"/>
    <property type="nucleotide sequence ID" value="NM_001415124.1"/>
</dbReference>
<dbReference type="RefSeq" id="NP_976081.1">
    <molecule id="P62510-2"/>
    <property type="nucleotide sequence ID" value="NM_203336.3"/>
</dbReference>
<dbReference type="RefSeq" id="XP_006250505.1">
    <property type="nucleotide sequence ID" value="XM_006250443.3"/>
</dbReference>
<dbReference type="RefSeq" id="XP_017454353.1">
    <property type="nucleotide sequence ID" value="XM_017598864.1"/>
</dbReference>
<dbReference type="RefSeq" id="XP_017454354.1">
    <property type="nucleotide sequence ID" value="XM_017598865.1"/>
</dbReference>
<dbReference type="RefSeq" id="XP_017454355.1">
    <molecule id="P62510-2"/>
    <property type="nucleotide sequence ID" value="XM_017598866.3"/>
</dbReference>
<dbReference type="RefSeq" id="XP_017454356.1">
    <property type="nucleotide sequence ID" value="XM_017598867.1"/>
</dbReference>
<dbReference type="RefSeq" id="XP_017454357.1">
    <property type="nucleotide sequence ID" value="XM_017598868.1"/>
</dbReference>
<dbReference type="RefSeq" id="XP_017454358.1">
    <property type="nucleotide sequence ID" value="XM_017598869.1"/>
</dbReference>
<dbReference type="RefSeq" id="XP_017454359.1">
    <property type="nucleotide sequence ID" value="XM_017598870.1"/>
</dbReference>
<dbReference type="RefSeq" id="XP_038946868.1">
    <molecule id="P62510-2"/>
    <property type="nucleotide sequence ID" value="XM_039090940.2"/>
</dbReference>
<dbReference type="RefSeq" id="XP_038946869.1">
    <molecule id="P62510-2"/>
    <property type="nucleotide sequence ID" value="XM_039090941.2"/>
</dbReference>
<dbReference type="RefSeq" id="XP_063128578.1">
    <molecule id="P62510-2"/>
    <property type="nucleotide sequence ID" value="XM_063272508.1"/>
</dbReference>
<dbReference type="RefSeq" id="XP_063128579.1">
    <molecule id="P62510-2"/>
    <property type="nucleotide sequence ID" value="XM_063272509.1"/>
</dbReference>
<dbReference type="RefSeq" id="XP_063128580.1">
    <molecule id="P62510-2"/>
    <property type="nucleotide sequence ID" value="XM_063272510.1"/>
</dbReference>
<dbReference type="RefSeq" id="XP_063128581.1">
    <molecule id="P62510-2"/>
    <property type="nucleotide sequence ID" value="XM_063272511.1"/>
</dbReference>
<dbReference type="SMR" id="P62510"/>
<dbReference type="FunCoup" id="P62510">
    <property type="interactions" value="656"/>
</dbReference>
<dbReference type="STRING" id="10116.ENSRNOP00000003489"/>
<dbReference type="GlyGen" id="P62510">
    <property type="glycosylation" value="1 site"/>
</dbReference>
<dbReference type="PhosphoSitePlus" id="P62510"/>
<dbReference type="PaxDb" id="10116-ENSRNOP00000003489"/>
<dbReference type="Ensembl" id="ENSRNOT00000003489.5">
    <molecule id="P62510-1"/>
    <property type="protein sequence ID" value="ENSRNOP00000003489.3"/>
    <property type="gene ID" value="ENSRNOG00000002593.5"/>
</dbReference>
<dbReference type="GeneID" id="360896"/>
<dbReference type="KEGG" id="rno:360896"/>
<dbReference type="UCSC" id="RGD:1303236">
    <molecule id="P62510-1"/>
    <property type="organism name" value="rat"/>
</dbReference>
<dbReference type="AGR" id="RGD:1303236"/>
<dbReference type="CTD" id="2104"/>
<dbReference type="RGD" id="1303236">
    <property type="gene designation" value="Esrrg"/>
</dbReference>
<dbReference type="eggNOG" id="KOG3575">
    <property type="taxonomic scope" value="Eukaryota"/>
</dbReference>
<dbReference type="GeneTree" id="ENSGT00940000153433"/>
<dbReference type="HOGENOM" id="CLU_007368_11_0_1"/>
<dbReference type="InParanoid" id="P62510"/>
<dbReference type="OMA" id="KYRTMKL"/>
<dbReference type="PhylomeDB" id="P62510"/>
<dbReference type="TreeFam" id="TF323751"/>
<dbReference type="Reactome" id="R-RNO-383280">
    <property type="pathway name" value="Nuclear Receptor transcription pathway"/>
</dbReference>
<dbReference type="PRO" id="PR:P62510"/>
<dbReference type="Proteomes" id="UP000002494">
    <property type="component" value="Chromosome 13"/>
</dbReference>
<dbReference type="Bgee" id="ENSRNOG00000002593">
    <property type="expression patterns" value="Expressed in stomach and 14 other cell types or tissues"/>
</dbReference>
<dbReference type="GO" id="GO:0000785">
    <property type="term" value="C:chromatin"/>
    <property type="evidence" value="ECO:0000318"/>
    <property type="project" value="GO_Central"/>
</dbReference>
<dbReference type="GO" id="GO:0005634">
    <property type="term" value="C:nucleus"/>
    <property type="evidence" value="ECO:0000318"/>
    <property type="project" value="GO_Central"/>
</dbReference>
<dbReference type="GO" id="GO:0050682">
    <property type="term" value="F:AF-2 domain binding"/>
    <property type="evidence" value="ECO:0000250"/>
    <property type="project" value="UniProtKB"/>
</dbReference>
<dbReference type="GO" id="GO:0001228">
    <property type="term" value="F:DNA-binding transcription activator activity, RNA polymerase II-specific"/>
    <property type="evidence" value="ECO:0000266"/>
    <property type="project" value="RGD"/>
</dbReference>
<dbReference type="GO" id="GO:0034056">
    <property type="term" value="F:estrogen response element binding"/>
    <property type="evidence" value="ECO:0000266"/>
    <property type="project" value="RGD"/>
</dbReference>
<dbReference type="GO" id="GO:0004879">
    <property type="term" value="F:nuclear receptor activity"/>
    <property type="evidence" value="ECO:0000318"/>
    <property type="project" value="GO_Central"/>
</dbReference>
<dbReference type="GO" id="GO:0003707">
    <property type="term" value="F:nuclear steroid receptor activity"/>
    <property type="evidence" value="ECO:0007669"/>
    <property type="project" value="InterPro"/>
</dbReference>
<dbReference type="GO" id="GO:0000977">
    <property type="term" value="F:RNA polymerase II transcription regulatory region sequence-specific DNA binding"/>
    <property type="evidence" value="ECO:0000266"/>
    <property type="project" value="RGD"/>
</dbReference>
<dbReference type="GO" id="GO:1990837">
    <property type="term" value="F:sequence-specific double-stranded DNA binding"/>
    <property type="evidence" value="ECO:0000266"/>
    <property type="project" value="RGD"/>
</dbReference>
<dbReference type="GO" id="GO:0005496">
    <property type="term" value="F:steroid binding"/>
    <property type="evidence" value="ECO:0007669"/>
    <property type="project" value="InterPro"/>
</dbReference>
<dbReference type="GO" id="GO:0008270">
    <property type="term" value="F:zinc ion binding"/>
    <property type="evidence" value="ECO:0007669"/>
    <property type="project" value="UniProtKB-KW"/>
</dbReference>
<dbReference type="GO" id="GO:0120162">
    <property type="term" value="P:positive regulation of cold-induced thermogenesis"/>
    <property type="evidence" value="ECO:0000250"/>
    <property type="project" value="YuBioLab"/>
</dbReference>
<dbReference type="GO" id="GO:0045893">
    <property type="term" value="P:positive regulation of DNA-templated transcription"/>
    <property type="evidence" value="ECO:0000266"/>
    <property type="project" value="RGD"/>
</dbReference>
<dbReference type="GO" id="GO:0045944">
    <property type="term" value="P:positive regulation of transcription by RNA polymerase II"/>
    <property type="evidence" value="ECO:0000250"/>
    <property type="project" value="UniProtKB"/>
</dbReference>
<dbReference type="GO" id="GO:0006355">
    <property type="term" value="P:regulation of DNA-templated transcription"/>
    <property type="evidence" value="ECO:0000250"/>
    <property type="project" value="UniProtKB"/>
</dbReference>
<dbReference type="GO" id="GO:0006357">
    <property type="term" value="P:regulation of transcription by RNA polymerase II"/>
    <property type="evidence" value="ECO:0000318"/>
    <property type="project" value="GO_Central"/>
</dbReference>
<dbReference type="GO" id="GO:0048384">
    <property type="term" value="P:retinoic acid receptor signaling pathway"/>
    <property type="evidence" value="ECO:0007669"/>
    <property type="project" value="InterPro"/>
</dbReference>
<dbReference type="CDD" id="cd07170">
    <property type="entry name" value="NR_DBD_ERR"/>
    <property type="match status" value="1"/>
</dbReference>
<dbReference type="CDD" id="cd06946">
    <property type="entry name" value="NR_LBD_ERR"/>
    <property type="match status" value="1"/>
</dbReference>
<dbReference type="FunFam" id="1.10.565.10:FF:000009">
    <property type="entry name" value="estrogen-related receptor gamma isoform X1"/>
    <property type="match status" value="1"/>
</dbReference>
<dbReference type="FunFam" id="3.30.50.10:FF:000008">
    <property type="entry name" value="estrogen-related receptor gamma isoform X1"/>
    <property type="match status" value="1"/>
</dbReference>
<dbReference type="Gene3D" id="3.30.50.10">
    <property type="entry name" value="Erythroid Transcription Factor GATA-1, subunit A"/>
    <property type="match status" value="1"/>
</dbReference>
<dbReference type="Gene3D" id="1.10.565.10">
    <property type="entry name" value="Retinoid X Receptor"/>
    <property type="match status" value="1"/>
</dbReference>
<dbReference type="InterPro" id="IPR024178">
    <property type="entry name" value="Est_rcpt/est-rel_rcp"/>
</dbReference>
<dbReference type="InterPro" id="IPR035500">
    <property type="entry name" value="NHR-like_dom_sf"/>
</dbReference>
<dbReference type="InterPro" id="IPR000536">
    <property type="entry name" value="Nucl_hrmn_rcpt_lig-bd"/>
</dbReference>
<dbReference type="InterPro" id="IPR050200">
    <property type="entry name" value="Nuclear_hormone_rcpt_NR3"/>
</dbReference>
<dbReference type="InterPro" id="IPR001723">
    <property type="entry name" value="Nuclear_hrmn_rcpt"/>
</dbReference>
<dbReference type="InterPro" id="IPR027289">
    <property type="entry name" value="Oest-rel_rcp"/>
</dbReference>
<dbReference type="InterPro" id="IPR003078">
    <property type="entry name" value="Retinoic_acid_rcpt"/>
</dbReference>
<dbReference type="InterPro" id="IPR001628">
    <property type="entry name" value="Znf_hrmn_rcpt"/>
</dbReference>
<dbReference type="InterPro" id="IPR013088">
    <property type="entry name" value="Znf_NHR/GATA"/>
</dbReference>
<dbReference type="PANTHER" id="PTHR48092">
    <property type="entry name" value="KNIRPS-RELATED PROTEIN-RELATED"/>
    <property type="match status" value="1"/>
</dbReference>
<dbReference type="Pfam" id="PF00104">
    <property type="entry name" value="Hormone_recep"/>
    <property type="match status" value="1"/>
</dbReference>
<dbReference type="Pfam" id="PF00105">
    <property type="entry name" value="zf-C4"/>
    <property type="match status" value="1"/>
</dbReference>
<dbReference type="PIRSF" id="PIRSF002527">
    <property type="entry name" value="ER-like_NR"/>
    <property type="match status" value="1"/>
</dbReference>
<dbReference type="PIRSF" id="PIRSF500939">
    <property type="entry name" value="ERR1-2-3"/>
    <property type="match status" value="1"/>
</dbReference>
<dbReference type="PRINTS" id="PR01292">
    <property type="entry name" value="RETNOICACIDR"/>
</dbReference>
<dbReference type="PRINTS" id="PR00398">
    <property type="entry name" value="STRDHORMONER"/>
</dbReference>
<dbReference type="PRINTS" id="PR00047">
    <property type="entry name" value="STROIDFINGER"/>
</dbReference>
<dbReference type="SMART" id="SM00430">
    <property type="entry name" value="HOLI"/>
    <property type="match status" value="1"/>
</dbReference>
<dbReference type="SMART" id="SM00399">
    <property type="entry name" value="ZnF_C4"/>
    <property type="match status" value="1"/>
</dbReference>
<dbReference type="SUPFAM" id="SSF57716">
    <property type="entry name" value="Glucocorticoid receptor-like (DNA-binding domain)"/>
    <property type="match status" value="1"/>
</dbReference>
<dbReference type="SUPFAM" id="SSF48508">
    <property type="entry name" value="Nuclear receptor ligand-binding domain"/>
    <property type="match status" value="1"/>
</dbReference>
<dbReference type="PROSITE" id="PS51843">
    <property type="entry name" value="NR_LBD"/>
    <property type="match status" value="1"/>
</dbReference>
<dbReference type="PROSITE" id="PS00031">
    <property type="entry name" value="NUCLEAR_REC_DBD_1"/>
    <property type="match status" value="1"/>
</dbReference>
<dbReference type="PROSITE" id="PS51030">
    <property type="entry name" value="NUCLEAR_REC_DBD_2"/>
    <property type="match status" value="1"/>
</dbReference>
<gene>
    <name type="primary">Esrrg</name>
    <name type="synonym">Errg</name>
    <name type="synonym">Nr3b3</name>
</gene>
<reference key="1">
    <citation type="submission" date="2003-11" db="EMBL/GenBank/DDBJ databases">
        <title>Specificity of binding sequence recognition of estrogen receptor-related receptor gamma.</title>
        <authorList>
            <person name="Razzaque M.A."/>
            <person name="Masuda N."/>
            <person name="Maeda Y."/>
            <person name="Endo Y."/>
            <person name="Tsukamoto T."/>
            <person name="Osumi T."/>
        </authorList>
    </citation>
    <scope>NUCLEOTIDE SEQUENCE [MRNA] (ISOFORMS 1 AND 2)</scope>
</reference>
<reference key="2">
    <citation type="submission" date="2003-07" db="EMBL/GenBank/DDBJ databases">
        <title>Molecular cloning and expression study of estrogen receptor-related receptor gamma in rat prostate.</title>
        <authorList>
            <person name="Lui K."/>
            <person name="Chen S."/>
            <person name="Chan F.L."/>
        </authorList>
    </citation>
    <scope>NUCLEOTIDE SEQUENCE [MRNA] (ISOFORM 1)</scope>
    <source>
        <strain>Noble</strain>
    </source>
</reference>
<protein>
    <recommendedName>
        <fullName>Estrogen-related receptor gamma</fullName>
    </recommendedName>
    <alternativeName>
        <fullName>Estrogen receptor-related protein 3</fullName>
    </alternativeName>
    <alternativeName>
        <fullName>Nuclear receptor subfamily 3 group B member 3</fullName>
    </alternativeName>
</protein>
<sequence length="458" mass="51306">MDSVELCLPESFSLHYEEELLCRMSNKDRHIDSSCSSFIKTEPSSPASLTDSVNHHSPGGSSDASGSYSSTMNGHQNGLDSPPLYPSAPILGGSGPVRKLYDDCSSTIVEDPQTKCEYMLNSMPKRLCLVCGDIASGYHYGVASCEACKAFFKRTIQGNIEYSCPATNECEITKRRRKSCQACRFMKCLKVGMLKEGVRLDRVRGGRQKYKRRIDAENSPYLNPQLVQPAKKPYNKIVSHLLVAEPEKIYAMPDPTVPDSDIKALTTLCDLADRELVVIIGWAKHIPGFSTLSLADQMSLLQSAWMEILILGVVYRSLSFEDELVYADDYIMDEDQSKLAGLLDLNNAILQLVKKYKSMKLEKEEFVTLKAIALANSDSMHIEDVEAVQKLQDVLHEALQDYEAGQHMEDPRRAGKMLMTLPLLRQTSTKAVQHFYNIKLEGKVPMHKLFLEMLEAKV</sequence>
<proteinExistence type="evidence at transcript level"/>